<proteinExistence type="evidence at protein level"/>
<evidence type="ECO:0000250" key="1"/>
<evidence type="ECO:0000255" key="2">
    <source>
        <dbReference type="PROSITE-ProRule" id="PRU00771"/>
    </source>
</evidence>
<evidence type="ECO:0000305" key="3"/>
<comment type="function">
    <text evidence="1">Rod linker protein, associated with allophycocyanin. Linker polypeptides determine the state of aggregation and the location of the disk-shaped phycobiliprotein units within the phycobilisome and modulate their spectroscopic properties in order to mediate a directed and optimal energy transfer (By similarity).</text>
</comment>
<comment type="subcellular location">
    <subcellularLocation>
        <location evidence="1">Cellular thylakoid membrane</location>
        <topology evidence="1">Peripheral membrane protein</topology>
        <orientation evidence="1">Cytoplasmic side</orientation>
    </subcellularLocation>
    <text evidence="3">This protein occurs in the rod, it is associated with allophycocyanin.</text>
</comment>
<comment type="similarity">
    <text evidence="3">Belongs to the phycobilisome linker protein family.</text>
</comment>
<reference key="1">
    <citation type="submission" date="1993-06" db="EMBL/GenBank/DDBJ databases">
        <title>Cloning and sequencing of the allophycocyanin operon from the thermophilic cyanobacterium Synechococcus elongatus.</title>
        <authorList>
            <person name="Shimazu T."/>
            <person name="Soga M."/>
            <person name="Hirano M."/>
            <person name="Katoh S."/>
        </authorList>
    </citation>
    <scope>NUCLEOTIDE SEQUENCE [GENOMIC DNA]</scope>
</reference>
<reference key="2">
    <citation type="journal article" date="2002" name="DNA Res.">
        <title>Complete genome structure of the thermophilic cyanobacterium Thermosynechococcus elongatus BP-1.</title>
        <authorList>
            <person name="Nakamura Y."/>
            <person name="Kaneko T."/>
            <person name="Sato S."/>
            <person name="Ikeuchi M."/>
            <person name="Katoh H."/>
            <person name="Sasamoto S."/>
            <person name="Watanabe A."/>
            <person name="Iriguchi M."/>
            <person name="Kawashima K."/>
            <person name="Kimura T."/>
            <person name="Kishida Y."/>
            <person name="Kiyokawa C."/>
            <person name="Kohara M."/>
            <person name="Matsumoto M."/>
            <person name="Matsuno A."/>
            <person name="Nakazaki N."/>
            <person name="Shimpo S."/>
            <person name="Sugimoto M."/>
            <person name="Takeuchi C."/>
            <person name="Yamada M."/>
            <person name="Tabata S."/>
        </authorList>
    </citation>
    <scope>NUCLEOTIDE SEQUENCE [LARGE SCALE GENOMIC DNA]</scope>
    <source>
        <strain>NIES-2133 / IAM M-273 / BP-1</strain>
    </source>
</reference>
<feature type="chain" id="PRO_0000199238" description="Phycobilisome 7.8 kDa linker polypeptide, allophycocyanin-associated, core">
    <location>
        <begin position="1"/>
        <end position="67"/>
    </location>
</feature>
<feature type="domain" description="CpcD-like" evidence="2">
    <location>
        <begin position="1"/>
        <end position="56"/>
    </location>
</feature>
<sequence length="67" mass="7864">MRMFKITACVPSQTRIRTQRELQNTYFTKLVPYENWFREQQRIQKMGGKIVKVELFTGKPGVNTGLA</sequence>
<protein>
    <recommendedName>
        <fullName>Phycobilisome 7.8 kDa linker polypeptide, allophycocyanin-associated, core</fullName>
    </recommendedName>
    <alternativeName>
        <fullName>LC 7.8</fullName>
    </alternativeName>
</protein>
<organism>
    <name type="scientific">Thermosynechococcus vestitus (strain NIES-2133 / IAM M-273 / BP-1)</name>
    <dbReference type="NCBI Taxonomy" id="197221"/>
    <lineage>
        <taxon>Bacteria</taxon>
        <taxon>Bacillati</taxon>
        <taxon>Cyanobacteriota</taxon>
        <taxon>Cyanophyceae</taxon>
        <taxon>Acaryochloridales</taxon>
        <taxon>Thermosynechococcaceae</taxon>
        <taxon>Thermosynechococcus</taxon>
    </lineage>
</organism>
<dbReference type="EMBL" id="D16540">
    <property type="protein sequence ID" value="BAA03978.1"/>
    <property type="molecule type" value="Genomic_DNA"/>
</dbReference>
<dbReference type="EMBL" id="BA000039">
    <property type="protein sequence ID" value="BAC08507.1"/>
    <property type="molecule type" value="Genomic_DNA"/>
</dbReference>
<dbReference type="RefSeq" id="NP_681745.1">
    <property type="nucleotide sequence ID" value="NC_004113.1"/>
</dbReference>
<dbReference type="RefSeq" id="WP_011056799.1">
    <property type="nucleotide sequence ID" value="NC_004113.1"/>
</dbReference>
<dbReference type="PDB" id="7VEA">
    <property type="method" value="EM"/>
    <property type="resolution" value="3.70 A"/>
    <property type="chains" value="aS/bY/cM/dS/eY/fM=1-67"/>
</dbReference>
<dbReference type="PDBsum" id="7VEA"/>
<dbReference type="EMDB" id="EMD-31944"/>
<dbReference type="SMR" id="P50036"/>
<dbReference type="STRING" id="197221.gene:10747547"/>
<dbReference type="EnsemblBacteria" id="BAC08507">
    <property type="protein sequence ID" value="BAC08507"/>
    <property type="gene ID" value="BAC08507"/>
</dbReference>
<dbReference type="KEGG" id="tel:tsl0955"/>
<dbReference type="PATRIC" id="fig|197221.4.peg.1002"/>
<dbReference type="eggNOG" id="ENOG5032S63">
    <property type="taxonomic scope" value="Bacteria"/>
</dbReference>
<dbReference type="Proteomes" id="UP000000440">
    <property type="component" value="Chromosome"/>
</dbReference>
<dbReference type="GO" id="GO:0030089">
    <property type="term" value="C:phycobilisome"/>
    <property type="evidence" value="ECO:0007669"/>
    <property type="project" value="UniProtKB-KW"/>
</dbReference>
<dbReference type="GO" id="GO:0031676">
    <property type="term" value="C:plasma membrane-derived thylakoid membrane"/>
    <property type="evidence" value="ECO:0007669"/>
    <property type="project" value="UniProtKB-SubCell"/>
</dbReference>
<dbReference type="GO" id="GO:0015979">
    <property type="term" value="P:photosynthesis"/>
    <property type="evidence" value="ECO:0007669"/>
    <property type="project" value="UniProtKB-KW"/>
</dbReference>
<dbReference type="Gene3D" id="3.30.1490.170">
    <property type="entry name" value="Allophycocyanin linker chain (domain)"/>
    <property type="match status" value="1"/>
</dbReference>
<dbReference type="InterPro" id="IPR011134">
    <property type="entry name" value="Allophyco_linker"/>
</dbReference>
<dbReference type="InterPro" id="IPR011064">
    <property type="entry name" value="Allophyco_linker_chain"/>
</dbReference>
<dbReference type="InterPro" id="IPR008213">
    <property type="entry name" value="CpcD-like_dom"/>
</dbReference>
<dbReference type="Pfam" id="PF01383">
    <property type="entry name" value="CpcD"/>
    <property type="match status" value="1"/>
</dbReference>
<dbReference type="PIRSF" id="PIRSF000083">
    <property type="entry name" value="Allophyco_linker"/>
    <property type="match status" value="1"/>
</dbReference>
<dbReference type="SMART" id="SM01094">
    <property type="entry name" value="CpcD"/>
    <property type="match status" value="1"/>
</dbReference>
<dbReference type="SUPFAM" id="SSF54580">
    <property type="entry name" value="Allophycocyanin linker chain (domain)"/>
    <property type="match status" value="1"/>
</dbReference>
<dbReference type="PROSITE" id="PS51441">
    <property type="entry name" value="CPCD_LIKE"/>
    <property type="match status" value="1"/>
</dbReference>
<keyword id="KW-0002">3D-structure</keyword>
<keyword id="KW-0042">Antenna complex</keyword>
<keyword id="KW-0472">Membrane</keyword>
<keyword id="KW-0602">Photosynthesis</keyword>
<keyword id="KW-0605">Phycobilisome</keyword>
<keyword id="KW-1185">Reference proteome</keyword>
<keyword id="KW-0793">Thylakoid</keyword>
<gene>
    <name type="primary">apcC</name>
    <name type="ordered locus">tsl0955</name>
</gene>
<name>PYC1_THEVB</name>
<accession>P50036</accession>